<gene>
    <name type="primary">UL65</name>
</gene>
<organism>
    <name type="scientific">Human cytomegalovirus (strain AD169)</name>
    <name type="common">HHV-5</name>
    <name type="synonym">Human herpesvirus 5</name>
    <dbReference type="NCBI Taxonomy" id="10360"/>
    <lineage>
        <taxon>Viruses</taxon>
        <taxon>Duplodnaviria</taxon>
        <taxon>Heunggongvirae</taxon>
        <taxon>Peploviricota</taxon>
        <taxon>Herviviricetes</taxon>
        <taxon>Herpesvirales</taxon>
        <taxon>Orthoherpesviridae</taxon>
        <taxon>Betaherpesvirinae</taxon>
        <taxon>Cytomegalovirus</taxon>
        <taxon>Cytomegalovirus humanbeta5</taxon>
        <taxon>Human cytomegalovirus</taxon>
    </lineage>
</organism>
<name>UL65_HCMVA</name>
<organismHost>
    <name type="scientific">Homo sapiens</name>
    <name type="common">Human</name>
    <dbReference type="NCBI Taxonomy" id="9606"/>
</organismHost>
<protein>
    <recommendedName>
        <fullName>Uncharacterized protein UL65</fullName>
    </recommendedName>
</protein>
<feature type="chain" id="PRO_0000115335" description="Uncharacterized protein UL65">
    <location>
        <begin position="1"/>
        <end position="102"/>
    </location>
</feature>
<feature type="region of interest" description="Disordered" evidence="1">
    <location>
        <begin position="1"/>
        <end position="24"/>
    </location>
</feature>
<feature type="compositionally biased region" description="Low complexity" evidence="1">
    <location>
        <begin position="1"/>
        <end position="13"/>
    </location>
</feature>
<evidence type="ECO:0000256" key="1">
    <source>
        <dbReference type="SAM" id="MobiDB-lite"/>
    </source>
</evidence>
<dbReference type="EMBL" id="X17403">
    <property type="protein sequence ID" value="CAA35380.1"/>
    <property type="molecule type" value="Genomic_DNA"/>
</dbReference>
<dbReference type="PIR" id="S09828">
    <property type="entry name" value="S09828"/>
</dbReference>
<dbReference type="Proteomes" id="UP000008991">
    <property type="component" value="Segment"/>
</dbReference>
<accession>P17148</accession>
<reference key="1">
    <citation type="journal article" date="1990" name="Curr. Top. Microbiol. Immunol.">
        <title>Analysis of the protein-coding content of the sequence of human cytomegalovirus strain AD169.</title>
        <authorList>
            <person name="Chee M.S."/>
            <person name="Bankier A.T."/>
            <person name="Beck S."/>
            <person name="Bohni R."/>
            <person name="Brown C.M."/>
            <person name="Cerny R."/>
            <person name="Horsnell T."/>
            <person name="Hutchison C.A. III"/>
            <person name="Kouzarides T."/>
            <person name="Martignetti J.A."/>
            <person name="Preddie E."/>
            <person name="Satchwell S.C."/>
            <person name="Tomlinson P."/>
            <person name="Weston K.M."/>
            <person name="Barrell B.G."/>
        </authorList>
    </citation>
    <scope>NUCLEOTIDE SEQUENCE [LARGE SCALE GENOMIC DNA]</scope>
</reference>
<sequence length="102" mass="11524">PSSSQALSVPSLSSEKKTASPTCVKTPSFRRCGKTGKYGRAEAKKTHHRHHTLMSTTCRCWSSSIVLYEHLDARVTDDGKTSRRRRCSLGRYALWIYNIYSS</sequence>
<proteinExistence type="predicted"/>